<comment type="function">
    <text evidence="1">This protein is involved in the repair of mismatches in DNA. It is required for dam-dependent methyl-directed DNA mismatch repair. May act as a 'molecular matchmaker', a protein that promotes the formation of a stable complex between two or more DNA-binding proteins in an ATP-dependent manner without itself being part of a final effector complex.</text>
</comment>
<comment type="similarity">
    <text evidence="1">Belongs to the DNA mismatch repair MutL/HexB family.</text>
</comment>
<feature type="chain" id="PRO_1000076716" description="DNA mismatch repair protein MutL">
    <location>
        <begin position="1"/>
        <end position="628"/>
    </location>
</feature>
<feature type="region of interest" description="Disordered" evidence="2">
    <location>
        <begin position="335"/>
        <end position="411"/>
    </location>
</feature>
<feature type="compositionally biased region" description="Polar residues" evidence="2">
    <location>
        <begin position="343"/>
        <end position="353"/>
    </location>
</feature>
<sequence>MAIEKLPPQLANQIAAGEVVERPASVIKELVENSLDAGATRVDIEIEKGGAKLIRIRDNGSGIPKEDLSLALSRHATSKLKSLDDLEAILSFGFRGEALASISSVSRLILTSRTAEQTEAWQAHAEGTEMAVKVLPAAHPVGSTVEAVDLFFNTPARRRFLKSDKTEFTHIDEWLKRIALARRDIHFTLKHNGKTVRNYRPANTEIQYIQRLGQICGKAFAETCLRIECEHNDLKLSGYLQSPSAASGYSETQYFYVNGRLVKDRLVNHAVRQAFSQYAEGISPGYVLMLELDPHQVDVNVHPAKHEVRFHQSRYVHDYILQALQSAMAQSTQLSVDIEPESEQTTAWQTSPTRGAVAPSHYVDESKSKPSAVFDVRERHSSASQAGYSGGGGSYRSQLKPASRNSEVSLPSQTSIRAYGELLSTDSVQTQSTNVPLRPAAHQAGMMSTSHGAASMPPVIAGQYWVLVKEDKISLLDIAMVAKAALKAEIAAKLAQGIIGQPLLMPVAISVDDDWPEIIDNREQLLRKLGIELSIRLGQLIIKKVPPYLRDSQLAALIPELLEWIRLELPSDAAVIKWLAEQAANRFTSASEAWFAFSALPDDVQCELYNHSQELPWEQWMKENQSDR</sequence>
<reference key="1">
    <citation type="submission" date="2007-10" db="EMBL/GenBank/DDBJ databases">
        <title>Complete sequence of Shewanella pealeana ATCC 700345.</title>
        <authorList>
            <consortium name="US DOE Joint Genome Institute"/>
            <person name="Copeland A."/>
            <person name="Lucas S."/>
            <person name="Lapidus A."/>
            <person name="Barry K."/>
            <person name="Glavina del Rio T."/>
            <person name="Dalin E."/>
            <person name="Tice H."/>
            <person name="Pitluck S."/>
            <person name="Chertkov O."/>
            <person name="Brettin T."/>
            <person name="Bruce D."/>
            <person name="Detter J.C."/>
            <person name="Han C."/>
            <person name="Schmutz J."/>
            <person name="Larimer F."/>
            <person name="Land M."/>
            <person name="Hauser L."/>
            <person name="Kyrpides N."/>
            <person name="Kim E."/>
            <person name="Zhao J.-S.Z."/>
            <person name="Manno D."/>
            <person name="Hawari J."/>
            <person name="Richardson P."/>
        </authorList>
    </citation>
    <scope>NUCLEOTIDE SEQUENCE [LARGE SCALE GENOMIC DNA]</scope>
    <source>
        <strain>ATCC 700345 / ANG-SQ1</strain>
    </source>
</reference>
<dbReference type="EMBL" id="CP000851">
    <property type="protein sequence ID" value="ABV88855.1"/>
    <property type="molecule type" value="Genomic_DNA"/>
</dbReference>
<dbReference type="RefSeq" id="WP_012156740.1">
    <property type="nucleotide sequence ID" value="NC_009901.1"/>
</dbReference>
<dbReference type="SMR" id="A8H8G8"/>
<dbReference type="STRING" id="398579.Spea_3542"/>
<dbReference type="KEGG" id="spl:Spea_3542"/>
<dbReference type="eggNOG" id="COG0323">
    <property type="taxonomic scope" value="Bacteria"/>
</dbReference>
<dbReference type="HOGENOM" id="CLU_004131_5_1_6"/>
<dbReference type="OrthoDB" id="9763467at2"/>
<dbReference type="Proteomes" id="UP000002608">
    <property type="component" value="Chromosome"/>
</dbReference>
<dbReference type="GO" id="GO:0032300">
    <property type="term" value="C:mismatch repair complex"/>
    <property type="evidence" value="ECO:0007669"/>
    <property type="project" value="InterPro"/>
</dbReference>
<dbReference type="GO" id="GO:0005524">
    <property type="term" value="F:ATP binding"/>
    <property type="evidence" value="ECO:0007669"/>
    <property type="project" value="InterPro"/>
</dbReference>
<dbReference type="GO" id="GO:0016887">
    <property type="term" value="F:ATP hydrolysis activity"/>
    <property type="evidence" value="ECO:0007669"/>
    <property type="project" value="InterPro"/>
</dbReference>
<dbReference type="GO" id="GO:0140664">
    <property type="term" value="F:ATP-dependent DNA damage sensor activity"/>
    <property type="evidence" value="ECO:0007669"/>
    <property type="project" value="InterPro"/>
</dbReference>
<dbReference type="GO" id="GO:0030983">
    <property type="term" value="F:mismatched DNA binding"/>
    <property type="evidence" value="ECO:0007669"/>
    <property type="project" value="InterPro"/>
</dbReference>
<dbReference type="GO" id="GO:0006298">
    <property type="term" value="P:mismatch repair"/>
    <property type="evidence" value="ECO:0007669"/>
    <property type="project" value="UniProtKB-UniRule"/>
</dbReference>
<dbReference type="CDD" id="cd16926">
    <property type="entry name" value="HATPase_MutL-MLH-PMS-like"/>
    <property type="match status" value="1"/>
</dbReference>
<dbReference type="CDD" id="cd03482">
    <property type="entry name" value="MutL_Trans_MutL"/>
    <property type="match status" value="1"/>
</dbReference>
<dbReference type="FunFam" id="3.30.230.10:FF:000013">
    <property type="entry name" value="DNA mismatch repair endonuclease MutL"/>
    <property type="match status" value="1"/>
</dbReference>
<dbReference type="FunFam" id="3.30.565.10:FF:000003">
    <property type="entry name" value="DNA mismatch repair endonuclease MutL"/>
    <property type="match status" value="1"/>
</dbReference>
<dbReference type="Gene3D" id="3.30.230.10">
    <property type="match status" value="1"/>
</dbReference>
<dbReference type="Gene3D" id="3.30.565.10">
    <property type="entry name" value="Histidine kinase-like ATPase, C-terminal domain"/>
    <property type="match status" value="1"/>
</dbReference>
<dbReference type="Gene3D" id="3.30.1370.100">
    <property type="entry name" value="MutL, C-terminal domain, regulatory subdomain"/>
    <property type="match status" value="1"/>
</dbReference>
<dbReference type="HAMAP" id="MF_00149">
    <property type="entry name" value="DNA_mis_repair"/>
    <property type="match status" value="1"/>
</dbReference>
<dbReference type="InterPro" id="IPR014762">
    <property type="entry name" value="DNA_mismatch_repair_CS"/>
</dbReference>
<dbReference type="InterPro" id="IPR020667">
    <property type="entry name" value="DNA_mismatch_repair_MutL"/>
</dbReference>
<dbReference type="InterPro" id="IPR013507">
    <property type="entry name" value="DNA_mismatch_S5_2-like"/>
</dbReference>
<dbReference type="InterPro" id="IPR036890">
    <property type="entry name" value="HATPase_C_sf"/>
</dbReference>
<dbReference type="InterPro" id="IPR002099">
    <property type="entry name" value="MutL/Mlh/PMS"/>
</dbReference>
<dbReference type="InterPro" id="IPR038973">
    <property type="entry name" value="MutL/Mlh/Pms-like"/>
</dbReference>
<dbReference type="InterPro" id="IPR014790">
    <property type="entry name" value="MutL_C"/>
</dbReference>
<dbReference type="InterPro" id="IPR042121">
    <property type="entry name" value="MutL_C_regsub"/>
</dbReference>
<dbReference type="InterPro" id="IPR037198">
    <property type="entry name" value="MutL_C_sf"/>
</dbReference>
<dbReference type="InterPro" id="IPR020568">
    <property type="entry name" value="Ribosomal_Su5_D2-typ_SF"/>
</dbReference>
<dbReference type="InterPro" id="IPR014721">
    <property type="entry name" value="Ribsml_uS5_D2-typ_fold_subgr"/>
</dbReference>
<dbReference type="NCBIfam" id="TIGR00585">
    <property type="entry name" value="mutl"/>
    <property type="match status" value="1"/>
</dbReference>
<dbReference type="NCBIfam" id="NF000948">
    <property type="entry name" value="PRK00095.1-1"/>
    <property type="match status" value="1"/>
</dbReference>
<dbReference type="PANTHER" id="PTHR10073">
    <property type="entry name" value="DNA MISMATCH REPAIR PROTEIN MLH, PMS, MUTL"/>
    <property type="match status" value="1"/>
</dbReference>
<dbReference type="PANTHER" id="PTHR10073:SF12">
    <property type="entry name" value="DNA MISMATCH REPAIR PROTEIN MLH1"/>
    <property type="match status" value="1"/>
</dbReference>
<dbReference type="Pfam" id="PF01119">
    <property type="entry name" value="DNA_mis_repair"/>
    <property type="match status" value="1"/>
</dbReference>
<dbReference type="Pfam" id="PF13589">
    <property type="entry name" value="HATPase_c_3"/>
    <property type="match status" value="1"/>
</dbReference>
<dbReference type="Pfam" id="PF08676">
    <property type="entry name" value="MutL_C"/>
    <property type="match status" value="1"/>
</dbReference>
<dbReference type="SMART" id="SM01340">
    <property type="entry name" value="DNA_mis_repair"/>
    <property type="match status" value="1"/>
</dbReference>
<dbReference type="SMART" id="SM00853">
    <property type="entry name" value="MutL_C"/>
    <property type="match status" value="1"/>
</dbReference>
<dbReference type="SUPFAM" id="SSF55874">
    <property type="entry name" value="ATPase domain of HSP90 chaperone/DNA topoisomerase II/histidine kinase"/>
    <property type="match status" value="1"/>
</dbReference>
<dbReference type="SUPFAM" id="SSF118116">
    <property type="entry name" value="DNA mismatch repair protein MutL"/>
    <property type="match status" value="1"/>
</dbReference>
<dbReference type="SUPFAM" id="SSF54211">
    <property type="entry name" value="Ribosomal protein S5 domain 2-like"/>
    <property type="match status" value="1"/>
</dbReference>
<dbReference type="PROSITE" id="PS00058">
    <property type="entry name" value="DNA_MISMATCH_REPAIR_1"/>
    <property type="match status" value="1"/>
</dbReference>
<organism>
    <name type="scientific">Shewanella pealeana (strain ATCC 700345 / ANG-SQ1)</name>
    <dbReference type="NCBI Taxonomy" id="398579"/>
    <lineage>
        <taxon>Bacteria</taxon>
        <taxon>Pseudomonadati</taxon>
        <taxon>Pseudomonadota</taxon>
        <taxon>Gammaproteobacteria</taxon>
        <taxon>Alteromonadales</taxon>
        <taxon>Shewanellaceae</taxon>
        <taxon>Shewanella</taxon>
    </lineage>
</organism>
<protein>
    <recommendedName>
        <fullName evidence="1">DNA mismatch repair protein MutL</fullName>
    </recommendedName>
</protein>
<proteinExistence type="inferred from homology"/>
<name>MUTL_SHEPA</name>
<accession>A8H8G8</accession>
<gene>
    <name evidence="1" type="primary">mutL</name>
    <name type="ordered locus">Spea_3542</name>
</gene>
<keyword id="KW-0227">DNA damage</keyword>
<keyword id="KW-0234">DNA repair</keyword>
<keyword id="KW-1185">Reference proteome</keyword>
<evidence type="ECO:0000255" key="1">
    <source>
        <dbReference type="HAMAP-Rule" id="MF_00149"/>
    </source>
</evidence>
<evidence type="ECO:0000256" key="2">
    <source>
        <dbReference type="SAM" id="MobiDB-lite"/>
    </source>
</evidence>